<feature type="chain" id="PRO_0000224969" description="Small ribosomal subunit protein bS20">
    <location>
        <begin position="1"/>
        <end position="89"/>
    </location>
</feature>
<feature type="region of interest" description="Disordered" evidence="2">
    <location>
        <begin position="1"/>
        <end position="29"/>
    </location>
</feature>
<protein>
    <recommendedName>
        <fullName evidence="1">Small ribosomal subunit protein bS20</fullName>
    </recommendedName>
    <alternativeName>
        <fullName evidence="3">30S ribosomal protein S20</fullName>
    </alternativeName>
</protein>
<organism>
    <name type="scientific">Haemophilus influenzae (strain 86-028NP)</name>
    <dbReference type="NCBI Taxonomy" id="281310"/>
    <lineage>
        <taxon>Bacteria</taxon>
        <taxon>Pseudomonadati</taxon>
        <taxon>Pseudomonadota</taxon>
        <taxon>Gammaproteobacteria</taxon>
        <taxon>Pasteurellales</taxon>
        <taxon>Pasteurellaceae</taxon>
        <taxon>Haemophilus</taxon>
    </lineage>
</organism>
<evidence type="ECO:0000255" key="1">
    <source>
        <dbReference type="HAMAP-Rule" id="MF_00500"/>
    </source>
</evidence>
<evidence type="ECO:0000256" key="2">
    <source>
        <dbReference type="SAM" id="MobiDB-lite"/>
    </source>
</evidence>
<evidence type="ECO:0000305" key="3"/>
<name>RS20_HAEI8</name>
<reference key="1">
    <citation type="journal article" date="2005" name="J. Bacteriol.">
        <title>Genomic sequence of an otitis media isolate of nontypeable Haemophilus influenzae: comparative study with H. influenzae serotype d, strain KW20.</title>
        <authorList>
            <person name="Harrison A."/>
            <person name="Dyer D.W."/>
            <person name="Gillaspy A."/>
            <person name="Ray W.C."/>
            <person name="Mungur R."/>
            <person name="Carson M.B."/>
            <person name="Zhong H."/>
            <person name="Gipson J."/>
            <person name="Gipson M."/>
            <person name="Johnson L.S."/>
            <person name="Lewis L."/>
            <person name="Bakaletz L.O."/>
            <person name="Munson R.S. Jr."/>
        </authorList>
    </citation>
    <scope>NUCLEOTIDE SEQUENCE [LARGE SCALE GENOMIC DNA]</scope>
    <source>
        <strain>86-028NP</strain>
    </source>
</reference>
<sequence>MTLANIKSAKKRAVQSEKRRQHNASQRSMMRTYIKKVYAQVAAGEKSAAESAFVEMQKVVDRMASKGLIHANKAANHKSKLAAQIKKLA</sequence>
<dbReference type="EMBL" id="CP000057">
    <property type="protein sequence ID" value="AAX88005.1"/>
    <property type="molecule type" value="Genomic_DNA"/>
</dbReference>
<dbReference type="SMR" id="Q4QLU2"/>
<dbReference type="KEGG" id="hit:NTHI1139"/>
<dbReference type="HOGENOM" id="CLU_160655_4_0_6"/>
<dbReference type="Proteomes" id="UP000002525">
    <property type="component" value="Chromosome"/>
</dbReference>
<dbReference type="GO" id="GO:0005829">
    <property type="term" value="C:cytosol"/>
    <property type="evidence" value="ECO:0007669"/>
    <property type="project" value="TreeGrafter"/>
</dbReference>
<dbReference type="GO" id="GO:0015935">
    <property type="term" value="C:small ribosomal subunit"/>
    <property type="evidence" value="ECO:0007669"/>
    <property type="project" value="TreeGrafter"/>
</dbReference>
<dbReference type="GO" id="GO:0070181">
    <property type="term" value="F:small ribosomal subunit rRNA binding"/>
    <property type="evidence" value="ECO:0007669"/>
    <property type="project" value="TreeGrafter"/>
</dbReference>
<dbReference type="GO" id="GO:0003735">
    <property type="term" value="F:structural constituent of ribosome"/>
    <property type="evidence" value="ECO:0007669"/>
    <property type="project" value="InterPro"/>
</dbReference>
<dbReference type="GO" id="GO:0006412">
    <property type="term" value="P:translation"/>
    <property type="evidence" value="ECO:0007669"/>
    <property type="project" value="UniProtKB-UniRule"/>
</dbReference>
<dbReference type="FunFam" id="1.20.58.110:FF:000001">
    <property type="entry name" value="30S ribosomal protein S20"/>
    <property type="match status" value="1"/>
</dbReference>
<dbReference type="Gene3D" id="1.20.58.110">
    <property type="entry name" value="Ribosomal protein S20"/>
    <property type="match status" value="1"/>
</dbReference>
<dbReference type="HAMAP" id="MF_00500">
    <property type="entry name" value="Ribosomal_bS20"/>
    <property type="match status" value="1"/>
</dbReference>
<dbReference type="InterPro" id="IPR002583">
    <property type="entry name" value="Ribosomal_bS20"/>
</dbReference>
<dbReference type="InterPro" id="IPR036510">
    <property type="entry name" value="Ribosomal_bS20_sf"/>
</dbReference>
<dbReference type="NCBIfam" id="TIGR00029">
    <property type="entry name" value="S20"/>
    <property type="match status" value="1"/>
</dbReference>
<dbReference type="PANTHER" id="PTHR33398">
    <property type="entry name" value="30S RIBOSOMAL PROTEIN S20"/>
    <property type="match status" value="1"/>
</dbReference>
<dbReference type="PANTHER" id="PTHR33398:SF1">
    <property type="entry name" value="SMALL RIBOSOMAL SUBUNIT PROTEIN BS20C"/>
    <property type="match status" value="1"/>
</dbReference>
<dbReference type="Pfam" id="PF01649">
    <property type="entry name" value="Ribosomal_S20p"/>
    <property type="match status" value="1"/>
</dbReference>
<dbReference type="SUPFAM" id="SSF46992">
    <property type="entry name" value="Ribosomal protein S20"/>
    <property type="match status" value="1"/>
</dbReference>
<comment type="function">
    <text evidence="1">Binds directly to 16S ribosomal RNA.</text>
</comment>
<comment type="similarity">
    <text evidence="1">Belongs to the bacterial ribosomal protein bS20 family.</text>
</comment>
<gene>
    <name evidence="1" type="primary">rpsT</name>
    <name type="ordered locus">NTHI1139</name>
</gene>
<keyword id="KW-0687">Ribonucleoprotein</keyword>
<keyword id="KW-0689">Ribosomal protein</keyword>
<keyword id="KW-0694">RNA-binding</keyword>
<keyword id="KW-0699">rRNA-binding</keyword>
<proteinExistence type="inferred from homology"/>
<accession>Q4QLU2</accession>